<protein>
    <recommendedName>
        <fullName evidence="1">Chaperone protein HtpG</fullName>
    </recommendedName>
    <alternativeName>
        <fullName evidence="1">Heat shock protein HtpG</fullName>
    </alternativeName>
    <alternativeName>
        <fullName evidence="1">High temperature protein G</fullName>
    </alternativeName>
</protein>
<gene>
    <name evidence="1" type="primary">htpG</name>
    <name type="ordered locus">A1I_04390</name>
</gene>
<reference key="1">
    <citation type="submission" date="2007-09" db="EMBL/GenBank/DDBJ databases">
        <title>Complete genome sequencing of Rickettsia bellii.</title>
        <authorList>
            <person name="Madan A."/>
            <person name="Lee H."/>
            <person name="Madan A."/>
            <person name="Yoon J.-G."/>
            <person name="Ryu G.-Y."/>
            <person name="Dasch G."/>
            <person name="Ereemeva M."/>
        </authorList>
    </citation>
    <scope>NUCLEOTIDE SEQUENCE [LARGE SCALE GENOMIC DNA]</scope>
    <source>
        <strain>OSU 85-389</strain>
    </source>
</reference>
<evidence type="ECO:0000255" key="1">
    <source>
        <dbReference type="HAMAP-Rule" id="MF_00505"/>
    </source>
</evidence>
<evidence type="ECO:0000256" key="2">
    <source>
        <dbReference type="SAM" id="MobiDB-lite"/>
    </source>
</evidence>
<sequence>MKQEKKKFDAEVGKILNLMIHSLYSNKEIFMRELISNASDACDKLRYLSQSEAELVAGDSNFKITVKGDKNNGQVIIRDNGIGMNKEDLIENLGTIARSGTANFLKNLSGDSKKDNMLIGQFGVGFYSSFMVADKVTVTSRKAGEDKVYVWESEGEGEYIVSNSDREFSRGTEIALHIKKEEDSFLDHFRLKHIVKSYSDHIAVPIYFFDEGDNNEIQLNSASALWTRSKSEITEEQYKEFYKSLSYAVDDPWVTMHNKNEGAIEFTNLLFIPSSKTYDLFHPDRKRRVKLYIKRVFISDENIDLIPSYLRFLRGVVDSEDLPLNISRESLQHNNVLEKIKNAITKRVLGELKKKKEDSPDEYNNFWANFGGALKEGLCEATTDHEKLLEVCIFRSALHNKMISLDEYIKGFKEGQNTIYYLSGDNPDKLLSSPQIEGLLSKNIDVLLFTDTVDDFWVNVNSEYKGHAIKSATRSDIDVDQATSSSEEKNKDDKKSDDEYKSLTDYFKEVLGILVKDVKISKKLTSSPACLAVSEAAMDIRMERFLIEQKQIANASAKNLELNPKNKIIEKIFNDLKANNKNNEELVKLIFDQACILEGEPVADTGAFSKRLNDIVQKAIL</sequence>
<feature type="chain" id="PRO_1000014946" description="Chaperone protein HtpG">
    <location>
        <begin position="1"/>
        <end position="621"/>
    </location>
</feature>
<feature type="region of interest" description="A; substrate-binding" evidence="1">
    <location>
        <begin position="1"/>
        <end position="328"/>
    </location>
</feature>
<feature type="region of interest" description="B" evidence="1">
    <location>
        <begin position="329"/>
        <end position="544"/>
    </location>
</feature>
<feature type="region of interest" description="Disordered" evidence="2">
    <location>
        <begin position="479"/>
        <end position="498"/>
    </location>
</feature>
<feature type="region of interest" description="C" evidence="1">
    <location>
        <begin position="545"/>
        <end position="621"/>
    </location>
</feature>
<feature type="compositionally biased region" description="Basic and acidic residues" evidence="2">
    <location>
        <begin position="486"/>
        <end position="498"/>
    </location>
</feature>
<organism>
    <name type="scientific">Rickettsia bellii (strain OSU 85-389)</name>
    <dbReference type="NCBI Taxonomy" id="391896"/>
    <lineage>
        <taxon>Bacteria</taxon>
        <taxon>Pseudomonadati</taxon>
        <taxon>Pseudomonadota</taxon>
        <taxon>Alphaproteobacteria</taxon>
        <taxon>Rickettsiales</taxon>
        <taxon>Rickettsiaceae</taxon>
        <taxon>Rickettsieae</taxon>
        <taxon>Rickettsia</taxon>
        <taxon>belli group</taxon>
    </lineage>
</organism>
<proteinExistence type="inferred from homology"/>
<keyword id="KW-0067">ATP-binding</keyword>
<keyword id="KW-0143">Chaperone</keyword>
<keyword id="KW-0963">Cytoplasm</keyword>
<keyword id="KW-0547">Nucleotide-binding</keyword>
<keyword id="KW-0346">Stress response</keyword>
<accession>A8GWJ4</accession>
<name>HTPG_RICB8</name>
<dbReference type="EMBL" id="CP000849">
    <property type="protein sequence ID" value="ABV79221.1"/>
    <property type="molecule type" value="Genomic_DNA"/>
</dbReference>
<dbReference type="RefSeq" id="WP_012151911.1">
    <property type="nucleotide sequence ID" value="NC_009883.1"/>
</dbReference>
<dbReference type="SMR" id="A8GWJ4"/>
<dbReference type="KEGG" id="rbo:A1I_04390"/>
<dbReference type="HOGENOM" id="CLU_006684_3_0_5"/>
<dbReference type="GO" id="GO:0005737">
    <property type="term" value="C:cytoplasm"/>
    <property type="evidence" value="ECO:0007669"/>
    <property type="project" value="UniProtKB-SubCell"/>
</dbReference>
<dbReference type="GO" id="GO:0005524">
    <property type="term" value="F:ATP binding"/>
    <property type="evidence" value="ECO:0007669"/>
    <property type="project" value="UniProtKB-UniRule"/>
</dbReference>
<dbReference type="GO" id="GO:0016887">
    <property type="term" value="F:ATP hydrolysis activity"/>
    <property type="evidence" value="ECO:0007669"/>
    <property type="project" value="InterPro"/>
</dbReference>
<dbReference type="GO" id="GO:0140662">
    <property type="term" value="F:ATP-dependent protein folding chaperone"/>
    <property type="evidence" value="ECO:0007669"/>
    <property type="project" value="InterPro"/>
</dbReference>
<dbReference type="GO" id="GO:0051082">
    <property type="term" value="F:unfolded protein binding"/>
    <property type="evidence" value="ECO:0007669"/>
    <property type="project" value="UniProtKB-UniRule"/>
</dbReference>
<dbReference type="CDD" id="cd16927">
    <property type="entry name" value="HATPase_Hsp90-like"/>
    <property type="match status" value="1"/>
</dbReference>
<dbReference type="FunFam" id="3.30.565.10:FF:000009">
    <property type="entry name" value="Molecular chaperone HtpG"/>
    <property type="match status" value="1"/>
</dbReference>
<dbReference type="Gene3D" id="3.30.230.80">
    <property type="match status" value="1"/>
</dbReference>
<dbReference type="Gene3D" id="3.40.50.11260">
    <property type="match status" value="1"/>
</dbReference>
<dbReference type="Gene3D" id="1.20.120.790">
    <property type="entry name" value="Heat shock protein 90, C-terminal domain"/>
    <property type="match status" value="1"/>
</dbReference>
<dbReference type="Gene3D" id="3.30.565.10">
    <property type="entry name" value="Histidine kinase-like ATPase, C-terminal domain"/>
    <property type="match status" value="1"/>
</dbReference>
<dbReference type="HAMAP" id="MF_00505">
    <property type="entry name" value="HSP90"/>
    <property type="match status" value="1"/>
</dbReference>
<dbReference type="InterPro" id="IPR036890">
    <property type="entry name" value="HATPase_C_sf"/>
</dbReference>
<dbReference type="InterPro" id="IPR019805">
    <property type="entry name" value="Heat_shock_protein_90_CS"/>
</dbReference>
<dbReference type="InterPro" id="IPR037196">
    <property type="entry name" value="HSP90_C"/>
</dbReference>
<dbReference type="InterPro" id="IPR001404">
    <property type="entry name" value="Hsp90_fam"/>
</dbReference>
<dbReference type="InterPro" id="IPR020575">
    <property type="entry name" value="Hsp90_N"/>
</dbReference>
<dbReference type="InterPro" id="IPR020568">
    <property type="entry name" value="Ribosomal_Su5_D2-typ_SF"/>
</dbReference>
<dbReference type="NCBIfam" id="NF003555">
    <property type="entry name" value="PRK05218.1"/>
    <property type="match status" value="1"/>
</dbReference>
<dbReference type="PANTHER" id="PTHR11528">
    <property type="entry name" value="HEAT SHOCK PROTEIN 90 FAMILY MEMBER"/>
    <property type="match status" value="1"/>
</dbReference>
<dbReference type="Pfam" id="PF13589">
    <property type="entry name" value="HATPase_c_3"/>
    <property type="match status" value="1"/>
</dbReference>
<dbReference type="Pfam" id="PF00183">
    <property type="entry name" value="HSP90"/>
    <property type="match status" value="1"/>
</dbReference>
<dbReference type="PIRSF" id="PIRSF002583">
    <property type="entry name" value="Hsp90"/>
    <property type="match status" value="1"/>
</dbReference>
<dbReference type="PRINTS" id="PR00775">
    <property type="entry name" value="HEATSHOCK90"/>
</dbReference>
<dbReference type="SMART" id="SM00387">
    <property type="entry name" value="HATPase_c"/>
    <property type="match status" value="1"/>
</dbReference>
<dbReference type="SUPFAM" id="SSF55874">
    <property type="entry name" value="ATPase domain of HSP90 chaperone/DNA topoisomerase II/histidine kinase"/>
    <property type="match status" value="1"/>
</dbReference>
<dbReference type="SUPFAM" id="SSF110942">
    <property type="entry name" value="HSP90 C-terminal domain"/>
    <property type="match status" value="1"/>
</dbReference>
<dbReference type="SUPFAM" id="SSF54211">
    <property type="entry name" value="Ribosomal protein S5 domain 2-like"/>
    <property type="match status" value="1"/>
</dbReference>
<dbReference type="PROSITE" id="PS00298">
    <property type="entry name" value="HSP90"/>
    <property type="match status" value="1"/>
</dbReference>
<comment type="function">
    <text evidence="1">Molecular chaperone. Has ATPase activity.</text>
</comment>
<comment type="subunit">
    <text evidence="1">Homodimer.</text>
</comment>
<comment type="subcellular location">
    <subcellularLocation>
        <location evidence="1">Cytoplasm</location>
    </subcellularLocation>
</comment>
<comment type="similarity">
    <text evidence="1">Belongs to the heat shock protein 90 family.</text>
</comment>